<sequence>MTEREKIIQQQKQLKALFSVWMKEKMNHEVVIFQKTDGKIVEHYPDGSEKIVGYAK</sequence>
<keyword id="KW-1185">Reference proteome</keyword>
<organism>
    <name type="scientific">Haemophilus influenzae (strain ATCC 51907 / DSM 11121 / KW20 / Rd)</name>
    <dbReference type="NCBI Taxonomy" id="71421"/>
    <lineage>
        <taxon>Bacteria</taxon>
        <taxon>Pseudomonadati</taxon>
        <taxon>Pseudomonadota</taxon>
        <taxon>Gammaproteobacteria</taxon>
        <taxon>Pasteurellales</taxon>
        <taxon>Pasteurellaceae</taxon>
        <taxon>Haemophilus</taxon>
    </lineage>
</organism>
<dbReference type="EMBL" id="L42023">
    <property type="protein sequence ID" value="AAC23050.1"/>
    <property type="molecule type" value="Genomic_DNA"/>
</dbReference>
<dbReference type="PIR" id="D64027">
    <property type="entry name" value="D64027"/>
</dbReference>
<dbReference type="SMR" id="P44174"/>
<dbReference type="STRING" id="71421.HI_1396"/>
<dbReference type="EnsemblBacteria" id="AAC23050">
    <property type="protein sequence ID" value="AAC23050"/>
    <property type="gene ID" value="HI_1396"/>
</dbReference>
<dbReference type="KEGG" id="hin:HI_1396"/>
<dbReference type="eggNOG" id="ENOG5031K3R">
    <property type="taxonomic scope" value="Bacteria"/>
</dbReference>
<dbReference type="HOGENOM" id="CLU_193752_0_0_6"/>
<dbReference type="Proteomes" id="UP000000579">
    <property type="component" value="Chromosome"/>
</dbReference>
<gene>
    <name type="ordered locus">HI_1396</name>
</gene>
<feature type="chain" id="PRO_0000078038" description="Uncharacterized protein HI_1396">
    <location>
        <begin position="1"/>
        <end position="56"/>
    </location>
</feature>
<accession>P44174</accession>
<protein>
    <recommendedName>
        <fullName>Uncharacterized protein HI_1396</fullName>
    </recommendedName>
</protein>
<name>Y1396_HAEIN</name>
<reference key="1">
    <citation type="journal article" date="1995" name="Science">
        <title>Whole-genome random sequencing and assembly of Haemophilus influenzae Rd.</title>
        <authorList>
            <person name="Fleischmann R.D."/>
            <person name="Adams M.D."/>
            <person name="White O."/>
            <person name="Clayton R.A."/>
            <person name="Kirkness E.F."/>
            <person name="Kerlavage A.R."/>
            <person name="Bult C.J."/>
            <person name="Tomb J.-F."/>
            <person name="Dougherty B.A."/>
            <person name="Merrick J.M."/>
            <person name="McKenney K."/>
            <person name="Sutton G.G."/>
            <person name="FitzHugh W."/>
            <person name="Fields C.A."/>
            <person name="Gocayne J.D."/>
            <person name="Scott J.D."/>
            <person name="Shirley R."/>
            <person name="Liu L.-I."/>
            <person name="Glodek A."/>
            <person name="Kelley J.M."/>
            <person name="Weidman J.F."/>
            <person name="Phillips C.A."/>
            <person name="Spriggs T."/>
            <person name="Hedblom E."/>
            <person name="Cotton M.D."/>
            <person name="Utterback T.R."/>
            <person name="Hanna M.C."/>
            <person name="Nguyen D.T."/>
            <person name="Saudek D.M."/>
            <person name="Brandon R.C."/>
            <person name="Fine L.D."/>
            <person name="Fritchman J.L."/>
            <person name="Fuhrmann J.L."/>
            <person name="Geoghagen N.S.M."/>
            <person name="Gnehm C.L."/>
            <person name="McDonald L.A."/>
            <person name="Small K.V."/>
            <person name="Fraser C.M."/>
            <person name="Smith H.O."/>
            <person name="Venter J.C."/>
        </authorList>
    </citation>
    <scope>NUCLEOTIDE SEQUENCE [LARGE SCALE GENOMIC DNA]</scope>
    <source>
        <strain>ATCC 51907 / DSM 11121 / KW20 / Rd</strain>
    </source>
</reference>
<proteinExistence type="predicted"/>